<sequence length="425" mass="47548">MNIVVVGLSHKTAPVEIREKLSIQEAKMDEAIAHLKSYPHVEEVAVISTCNRLEIYAVVQETEQGVREICQFLAETGQLQLNRLRRYLFTLLHQDAIRHLLRVAAGLESLVLGEGQILAQVKAAHKLGQQHKGLGRLLDRMFKRAITAGKRVRSETNIGTGAVSISSAAVELAQMKVKDLSNQKIAIIGAGKMSRLLVQHLVSKGAEDITIVNRSERGARDLAKKFPDVDLQLELLPEMLNVVEQADIVFTSTGATEPILDRAKLENLDLHTLILIDISVPLNVAADVEEIAGVRLYNVDALKEVVAQNQASRRKMAEEAEALLEEEVENYIQWWQSLETVPTISSLRSKVESIREQELEKALSRLGAEFEEKHQEVIETLTRGIVNKILHDPMVQLRAQQDIEARRVCLQSLQMLFNLETEEAI</sequence>
<gene>
    <name evidence="1" type="primary">hemA</name>
    <name type="ordered locus">SYNPCC7002_A1302</name>
</gene>
<comment type="function">
    <text evidence="1">Catalyzes the NADPH-dependent reduction of glutamyl-tRNA(Glu) to glutamate 1-semialdehyde (GSA).</text>
</comment>
<comment type="catalytic activity">
    <reaction evidence="1">
        <text>(S)-4-amino-5-oxopentanoate + tRNA(Glu) + NADP(+) = L-glutamyl-tRNA(Glu) + NADPH + H(+)</text>
        <dbReference type="Rhea" id="RHEA:12344"/>
        <dbReference type="Rhea" id="RHEA-COMP:9663"/>
        <dbReference type="Rhea" id="RHEA-COMP:9680"/>
        <dbReference type="ChEBI" id="CHEBI:15378"/>
        <dbReference type="ChEBI" id="CHEBI:57501"/>
        <dbReference type="ChEBI" id="CHEBI:57783"/>
        <dbReference type="ChEBI" id="CHEBI:58349"/>
        <dbReference type="ChEBI" id="CHEBI:78442"/>
        <dbReference type="ChEBI" id="CHEBI:78520"/>
        <dbReference type="EC" id="1.2.1.70"/>
    </reaction>
</comment>
<comment type="pathway">
    <text evidence="1">Porphyrin-containing compound metabolism; protoporphyrin-IX biosynthesis; 5-aminolevulinate from L-glutamyl-tRNA(Glu): step 1/2.</text>
</comment>
<comment type="pathway">
    <text evidence="1">Porphyrin-containing compound metabolism; chlorophyll biosynthesis.</text>
</comment>
<comment type="subunit">
    <text evidence="1">Homodimer.</text>
</comment>
<comment type="domain">
    <text evidence="1">Possesses an unusual extended V-shaped dimeric structure with each monomer consisting of three distinct domains arranged along a curved 'spinal' alpha-helix. The N-terminal catalytic domain specifically recognizes the glutamate moiety of the substrate. The second domain is the NADPH-binding domain, and the third C-terminal domain is responsible for dimerization.</text>
</comment>
<comment type="miscellaneous">
    <text evidence="1">During catalysis, the active site Cys acts as a nucleophile attacking the alpha-carbonyl group of tRNA-bound glutamate with the formation of a thioester intermediate between enzyme and glutamate, and the concomitant release of tRNA(Glu). The thioester intermediate is finally reduced by direct hydride transfer from NADPH, to form the product GSA.</text>
</comment>
<comment type="similarity">
    <text evidence="1">Belongs to the glutamyl-tRNA reductase family.</text>
</comment>
<proteinExistence type="inferred from homology"/>
<accession>B1XLK6</accession>
<protein>
    <recommendedName>
        <fullName evidence="1">Glutamyl-tRNA reductase</fullName>
        <shortName evidence="1">GluTR</shortName>
        <ecNumber evidence="1">1.2.1.70</ecNumber>
    </recommendedName>
</protein>
<organism>
    <name type="scientific">Picosynechococcus sp. (strain ATCC 27264 / PCC 7002 / PR-6)</name>
    <name type="common">Agmenellum quadruplicatum</name>
    <dbReference type="NCBI Taxonomy" id="32049"/>
    <lineage>
        <taxon>Bacteria</taxon>
        <taxon>Bacillati</taxon>
        <taxon>Cyanobacteriota</taxon>
        <taxon>Cyanophyceae</taxon>
        <taxon>Oscillatoriophycideae</taxon>
        <taxon>Chroococcales</taxon>
        <taxon>Geminocystaceae</taxon>
        <taxon>Picosynechococcus</taxon>
    </lineage>
</organism>
<feature type="chain" id="PRO_1000093174" description="Glutamyl-tRNA reductase">
    <location>
        <begin position="1"/>
        <end position="425"/>
    </location>
</feature>
<feature type="active site" description="Nucleophile" evidence="1">
    <location>
        <position position="50"/>
    </location>
</feature>
<feature type="binding site" evidence="1">
    <location>
        <begin position="49"/>
        <end position="52"/>
    </location>
    <ligand>
        <name>substrate</name>
    </ligand>
</feature>
<feature type="binding site" evidence="1">
    <location>
        <position position="109"/>
    </location>
    <ligand>
        <name>substrate</name>
    </ligand>
</feature>
<feature type="binding site" evidence="1">
    <location>
        <begin position="114"/>
        <end position="116"/>
    </location>
    <ligand>
        <name>substrate</name>
    </ligand>
</feature>
<feature type="binding site" evidence="1">
    <location>
        <position position="120"/>
    </location>
    <ligand>
        <name>substrate</name>
    </ligand>
</feature>
<feature type="binding site" evidence="1">
    <location>
        <begin position="189"/>
        <end position="194"/>
    </location>
    <ligand>
        <name>NADP(+)</name>
        <dbReference type="ChEBI" id="CHEBI:58349"/>
    </ligand>
</feature>
<feature type="site" description="Important for activity" evidence="1">
    <location>
        <position position="99"/>
    </location>
</feature>
<keyword id="KW-0149">Chlorophyll biosynthesis</keyword>
<keyword id="KW-0521">NADP</keyword>
<keyword id="KW-0560">Oxidoreductase</keyword>
<keyword id="KW-0627">Porphyrin biosynthesis</keyword>
<keyword id="KW-1185">Reference proteome</keyword>
<evidence type="ECO:0000255" key="1">
    <source>
        <dbReference type="HAMAP-Rule" id="MF_00087"/>
    </source>
</evidence>
<name>HEM1_PICP2</name>
<reference key="1">
    <citation type="submission" date="2008-02" db="EMBL/GenBank/DDBJ databases">
        <title>Complete sequence of Synechococcus sp. PCC 7002.</title>
        <authorList>
            <person name="Li T."/>
            <person name="Zhao J."/>
            <person name="Zhao C."/>
            <person name="Liu Z."/>
            <person name="Zhao F."/>
            <person name="Marquardt J."/>
            <person name="Nomura C.T."/>
            <person name="Persson S."/>
            <person name="Detter J.C."/>
            <person name="Richardson P.M."/>
            <person name="Lanz C."/>
            <person name="Schuster S.C."/>
            <person name="Wang J."/>
            <person name="Li S."/>
            <person name="Huang X."/>
            <person name="Cai T."/>
            <person name="Yu Z."/>
            <person name="Luo J."/>
            <person name="Zhao J."/>
            <person name="Bryant D.A."/>
        </authorList>
    </citation>
    <scope>NUCLEOTIDE SEQUENCE [LARGE SCALE GENOMIC DNA]</scope>
    <source>
        <strain>ATCC 27264 / PCC 7002 / PR-6</strain>
    </source>
</reference>
<dbReference type="EC" id="1.2.1.70" evidence="1"/>
<dbReference type="EMBL" id="CP000951">
    <property type="protein sequence ID" value="ACA99299.1"/>
    <property type="molecule type" value="Genomic_DNA"/>
</dbReference>
<dbReference type="RefSeq" id="WP_012306922.1">
    <property type="nucleotide sequence ID" value="NZ_JAHHPU010000001.1"/>
</dbReference>
<dbReference type="SMR" id="B1XLK6"/>
<dbReference type="STRING" id="32049.SYNPCC7002_A1302"/>
<dbReference type="KEGG" id="syp:SYNPCC7002_A1302"/>
<dbReference type="eggNOG" id="COG0373">
    <property type="taxonomic scope" value="Bacteria"/>
</dbReference>
<dbReference type="HOGENOM" id="CLU_035113_2_1_3"/>
<dbReference type="UniPathway" id="UPA00251">
    <property type="reaction ID" value="UER00316"/>
</dbReference>
<dbReference type="UniPathway" id="UPA00668"/>
<dbReference type="Proteomes" id="UP000001688">
    <property type="component" value="Chromosome"/>
</dbReference>
<dbReference type="GO" id="GO:0008883">
    <property type="term" value="F:glutamyl-tRNA reductase activity"/>
    <property type="evidence" value="ECO:0007669"/>
    <property type="project" value="UniProtKB-UniRule"/>
</dbReference>
<dbReference type="GO" id="GO:0050661">
    <property type="term" value="F:NADP binding"/>
    <property type="evidence" value="ECO:0007669"/>
    <property type="project" value="InterPro"/>
</dbReference>
<dbReference type="GO" id="GO:0015995">
    <property type="term" value="P:chlorophyll biosynthetic process"/>
    <property type="evidence" value="ECO:0007669"/>
    <property type="project" value="UniProtKB-UniRule"/>
</dbReference>
<dbReference type="GO" id="GO:0006782">
    <property type="term" value="P:protoporphyrinogen IX biosynthetic process"/>
    <property type="evidence" value="ECO:0007669"/>
    <property type="project" value="UniProtKB-UniRule"/>
</dbReference>
<dbReference type="CDD" id="cd05213">
    <property type="entry name" value="NAD_bind_Glutamyl_tRNA_reduct"/>
    <property type="match status" value="1"/>
</dbReference>
<dbReference type="FunFam" id="3.30.460.30:FF:000001">
    <property type="entry name" value="Glutamyl-tRNA reductase"/>
    <property type="match status" value="1"/>
</dbReference>
<dbReference type="FunFam" id="3.40.50.720:FF:000031">
    <property type="entry name" value="Glutamyl-tRNA reductase"/>
    <property type="match status" value="1"/>
</dbReference>
<dbReference type="Gene3D" id="3.30.460.30">
    <property type="entry name" value="Glutamyl-tRNA reductase, N-terminal domain"/>
    <property type="match status" value="1"/>
</dbReference>
<dbReference type="Gene3D" id="3.40.50.720">
    <property type="entry name" value="NAD(P)-binding Rossmann-like Domain"/>
    <property type="match status" value="1"/>
</dbReference>
<dbReference type="HAMAP" id="MF_00087">
    <property type="entry name" value="Glu_tRNA_reductase"/>
    <property type="match status" value="1"/>
</dbReference>
<dbReference type="InterPro" id="IPR000343">
    <property type="entry name" value="4pyrrol_synth_GluRdtase"/>
</dbReference>
<dbReference type="InterPro" id="IPR015896">
    <property type="entry name" value="4pyrrol_synth_GluRdtase_dimer"/>
</dbReference>
<dbReference type="InterPro" id="IPR015895">
    <property type="entry name" value="4pyrrol_synth_GluRdtase_N"/>
</dbReference>
<dbReference type="InterPro" id="IPR018214">
    <property type="entry name" value="GluRdtase_CS"/>
</dbReference>
<dbReference type="InterPro" id="IPR036453">
    <property type="entry name" value="GluRdtase_dimer_dom_sf"/>
</dbReference>
<dbReference type="InterPro" id="IPR036343">
    <property type="entry name" value="GluRdtase_N_sf"/>
</dbReference>
<dbReference type="InterPro" id="IPR036291">
    <property type="entry name" value="NAD(P)-bd_dom_sf"/>
</dbReference>
<dbReference type="InterPro" id="IPR006151">
    <property type="entry name" value="Shikm_DH/Glu-tRNA_Rdtase"/>
</dbReference>
<dbReference type="NCBIfam" id="TIGR01035">
    <property type="entry name" value="hemA"/>
    <property type="match status" value="1"/>
</dbReference>
<dbReference type="NCBIfam" id="NF000744">
    <property type="entry name" value="PRK00045.1-3"/>
    <property type="match status" value="1"/>
</dbReference>
<dbReference type="PANTHER" id="PTHR43120">
    <property type="entry name" value="GLUTAMYL-TRNA REDUCTASE 1, CHLOROPLASTIC"/>
    <property type="match status" value="1"/>
</dbReference>
<dbReference type="PANTHER" id="PTHR43120:SF1">
    <property type="entry name" value="GLUTAMYL-TRNA REDUCTASE 1, CHLOROPLASTIC"/>
    <property type="match status" value="1"/>
</dbReference>
<dbReference type="Pfam" id="PF00745">
    <property type="entry name" value="GlutR_dimer"/>
    <property type="match status" value="1"/>
</dbReference>
<dbReference type="Pfam" id="PF05201">
    <property type="entry name" value="GlutR_N"/>
    <property type="match status" value="1"/>
</dbReference>
<dbReference type="Pfam" id="PF01488">
    <property type="entry name" value="Shikimate_DH"/>
    <property type="match status" value="1"/>
</dbReference>
<dbReference type="PIRSF" id="PIRSF000445">
    <property type="entry name" value="4pyrrol_synth_GluRdtase"/>
    <property type="match status" value="1"/>
</dbReference>
<dbReference type="SUPFAM" id="SSF69742">
    <property type="entry name" value="Glutamyl tRNA-reductase catalytic, N-terminal domain"/>
    <property type="match status" value="1"/>
</dbReference>
<dbReference type="SUPFAM" id="SSF69075">
    <property type="entry name" value="Glutamyl tRNA-reductase dimerization domain"/>
    <property type="match status" value="1"/>
</dbReference>
<dbReference type="SUPFAM" id="SSF51735">
    <property type="entry name" value="NAD(P)-binding Rossmann-fold domains"/>
    <property type="match status" value="1"/>
</dbReference>
<dbReference type="PROSITE" id="PS00747">
    <property type="entry name" value="GLUTR"/>
    <property type="match status" value="1"/>
</dbReference>